<proteinExistence type="predicted"/>
<sequence length="77" mass="8695">MKKDWDPNDPKLKSPYAPHETAAVLRMHRVGFKGAHTMKLLKLRGTQLMNQIQRAMDAEQAAHRAGRPIHDAGVVKQ</sequence>
<feature type="chain" id="PRO_0000164808" description="Gene 68 protein">
    <location>
        <begin position="1"/>
        <end position="77"/>
    </location>
</feature>
<name>VG68_BPMD2</name>
<gene>
    <name type="primary">68</name>
</gene>
<protein>
    <recommendedName>
        <fullName>Gene 68 protein</fullName>
    </recommendedName>
    <alternativeName>
        <fullName>Gp68</fullName>
    </alternativeName>
</protein>
<organismHost>
    <name type="scientific">Mycobacterium</name>
    <dbReference type="NCBI Taxonomy" id="1763"/>
</organismHost>
<reference key="1">
    <citation type="journal article" date="1998" name="J. Mol. Biol.">
        <title>Genome structure of mycobacteriophage D29: implications for phage evolution.</title>
        <authorList>
            <person name="Ford M.E."/>
            <person name="Sarkis G.J."/>
            <person name="Belanger A.E."/>
            <person name="Hendrix R.W."/>
            <person name="Hatfull G.F."/>
        </authorList>
    </citation>
    <scope>NUCLEOTIDE SEQUENCE [LARGE SCALE GENOMIC DNA]</scope>
</reference>
<accession>O64260</accession>
<keyword id="KW-1185">Reference proteome</keyword>
<dbReference type="EMBL" id="AF022214">
    <property type="protein sequence ID" value="AAC18509.1"/>
    <property type="molecule type" value="Genomic_DNA"/>
</dbReference>
<dbReference type="PIR" id="C72808">
    <property type="entry name" value="C72808"/>
</dbReference>
<dbReference type="RefSeq" id="NP_046885.1">
    <property type="nucleotide sequence ID" value="NC_001900.1"/>
</dbReference>
<dbReference type="SMR" id="O64260"/>
<dbReference type="GeneID" id="1261637"/>
<dbReference type="KEGG" id="vg:1261637"/>
<dbReference type="OrthoDB" id="14908at10239"/>
<dbReference type="Proteomes" id="UP000002131">
    <property type="component" value="Segment"/>
</dbReference>
<dbReference type="InterPro" id="IPR035343">
    <property type="entry name" value="Gp68"/>
</dbReference>
<dbReference type="Pfam" id="PF17469">
    <property type="entry name" value="GP68"/>
    <property type="match status" value="1"/>
</dbReference>
<organism>
    <name type="scientific">Mycobacterium phage D29</name>
    <name type="common">Mycobacteriophage D29</name>
    <dbReference type="NCBI Taxonomy" id="28369"/>
    <lineage>
        <taxon>Viruses</taxon>
        <taxon>Duplodnaviria</taxon>
        <taxon>Heunggongvirae</taxon>
        <taxon>Uroviricota</taxon>
        <taxon>Caudoviricetes</taxon>
        <taxon>Fromanvirus</taxon>
    </lineage>
</organism>